<name>AT151_PHANO</name>
<keyword id="KW-0072">Autophagy</keyword>
<keyword id="KW-0967">Endosome</keyword>
<keyword id="KW-0325">Glycoprotein</keyword>
<keyword id="KW-0378">Hydrolase</keyword>
<keyword id="KW-0442">Lipid degradation</keyword>
<keyword id="KW-0443">Lipid metabolism</keyword>
<keyword id="KW-0472">Membrane</keyword>
<keyword id="KW-0735">Signal-anchor</keyword>
<keyword id="KW-0812">Transmembrane</keyword>
<keyword id="KW-1133">Transmembrane helix</keyword>
<gene>
    <name type="primary">ATG15-1</name>
    <name type="ORF">SNOG_02073</name>
</gene>
<reference key="1">
    <citation type="journal article" date="2007" name="Plant Cell">
        <title>Dothideomycete-plant interactions illuminated by genome sequencing and EST analysis of the wheat pathogen Stagonospora nodorum.</title>
        <authorList>
            <person name="Hane J.K."/>
            <person name="Lowe R.G.T."/>
            <person name="Solomon P.S."/>
            <person name="Tan K.-C."/>
            <person name="Schoch C.L."/>
            <person name="Spatafora J.W."/>
            <person name="Crous P.W."/>
            <person name="Kodira C.D."/>
            <person name="Birren B.W."/>
            <person name="Galagan J.E."/>
            <person name="Torriani S.F.F."/>
            <person name="McDonald B.A."/>
            <person name="Oliver R.P."/>
        </authorList>
    </citation>
    <scope>NUCLEOTIDE SEQUENCE [LARGE SCALE GENOMIC DNA]</scope>
    <source>
        <strain>SN15 / ATCC MYA-4574 / FGSC 10173</strain>
    </source>
</reference>
<accession>Q0V1P1</accession>
<feature type="chain" id="PRO_0000317968" description="Putative lipase ATG15-1">
    <location>
        <begin position="1"/>
        <end position="594"/>
    </location>
</feature>
<feature type="topological domain" description="Cytoplasmic" evidence="1">
    <location>
        <begin position="1"/>
        <end position="12"/>
    </location>
</feature>
<feature type="transmembrane region" description="Helical; Signal-anchor for type II membrane protein">
    <location>
        <begin position="13"/>
        <end position="33"/>
    </location>
</feature>
<feature type="topological domain" description="Lumenal" evidence="1">
    <location>
        <begin position="34"/>
        <end position="594"/>
    </location>
</feature>
<feature type="region of interest" description="Disordered" evidence="4">
    <location>
        <begin position="447"/>
        <end position="473"/>
    </location>
</feature>
<feature type="region of interest" description="Disordered" evidence="4">
    <location>
        <begin position="489"/>
        <end position="509"/>
    </location>
</feature>
<feature type="compositionally biased region" description="Low complexity" evidence="4">
    <location>
        <begin position="447"/>
        <end position="469"/>
    </location>
</feature>
<feature type="active site" description="Charge relay system" evidence="1">
    <location>
        <position position="299"/>
    </location>
</feature>
<feature type="glycosylation site" description="N-linked (GlcNAc...) asparagine" evidence="3">
    <location>
        <position position="144"/>
    </location>
</feature>
<feature type="glycosylation site" description="N-linked (GlcNAc...) asparagine" evidence="3">
    <location>
        <position position="179"/>
    </location>
</feature>
<feature type="glycosylation site" description="N-linked (GlcNAc...) asparagine" evidence="3">
    <location>
        <position position="201"/>
    </location>
</feature>
<feature type="glycosylation site" description="N-linked (GlcNAc...) asparagine" evidence="3">
    <location>
        <position position="259"/>
    </location>
</feature>
<feature type="glycosylation site" description="N-linked (GlcNAc...) asparagine" evidence="3">
    <location>
        <position position="283"/>
    </location>
</feature>
<feature type="glycosylation site" description="N-linked (GlcNAc...) asparagine" evidence="3">
    <location>
        <position position="432"/>
    </location>
</feature>
<feature type="glycosylation site" description="N-linked (GlcNAc...) asparagine" evidence="3">
    <location>
        <position position="445"/>
    </location>
</feature>
<feature type="glycosylation site" description="N-linked (GlcNAc...) asparagine" evidence="3">
    <location>
        <position position="576"/>
    </location>
</feature>
<feature type="glycosylation site" description="N-linked (GlcNAc...) asparagine" evidence="3">
    <location>
        <position position="582"/>
    </location>
</feature>
<comment type="function">
    <text evidence="1">Lipase which is essential for lysis of subvacuolar cytoplasm to vacuole targeted bodies and intravacuolar autophagic bodies. Involved in the lysis of intravacuolar multivesicular body (MVB) vesicles. The intravacuolar membrane disintegration by ATG15 is critical to life span extension (By similarity).</text>
</comment>
<comment type="catalytic activity">
    <reaction>
        <text>a triacylglycerol + H2O = a diacylglycerol + a fatty acid + H(+)</text>
        <dbReference type="Rhea" id="RHEA:12044"/>
        <dbReference type="ChEBI" id="CHEBI:15377"/>
        <dbReference type="ChEBI" id="CHEBI:15378"/>
        <dbReference type="ChEBI" id="CHEBI:17855"/>
        <dbReference type="ChEBI" id="CHEBI:18035"/>
        <dbReference type="ChEBI" id="CHEBI:28868"/>
        <dbReference type="EC" id="3.1.1.3"/>
    </reaction>
</comment>
<comment type="subunit">
    <text evidence="1">Binds to both phosphatidylinositol (PI) and phosphatidylinositol 3,5-bisphosphate (PIP2).</text>
</comment>
<comment type="subcellular location">
    <subcellularLocation>
        <location evidence="2">Endosome</location>
        <location evidence="2">Multivesicular body membrane</location>
        <topology evidence="2">Single-pass type II membrane protein</topology>
    </subcellularLocation>
    <subcellularLocation>
        <location evidence="2">Prevacuolar compartment membrane</location>
        <topology evidence="2">Single-pass type II membrane protein</topology>
    </subcellularLocation>
    <text evidence="2">From ER, targeted to vacuolar lumen at the MVB vesicles via the Golgi and the prevacuolar compartment (PVC).</text>
</comment>
<comment type="similarity">
    <text evidence="5">Belongs to the AB hydrolase superfamily. Lipase family.</text>
</comment>
<sequence length="594" mass="66120">MRRRPLCTSASRVTASLLLSFLAVSSAAELPILPAPPISPQPHSSEKDFSLRHIFHHGTYKYPELHRRLDVPENAAVWAAEHLHSEHREPVPRLRVKAEPMSIQRLADRSKEAIDGILEWGRMKGRAVQLAEDDWTIDEIAGPNVTDRETVLSFARMASNAYILEPNTGEWEDVGGGFNYTEDFGWESDGLRGHIFADTENSTVVIGLKGTSPAMFDGSETTTKDKENDNLFFSCCCGQGGQFLWRQVCDCQTSAYTCNSTCLVTALREKNRYYYAAQDLYHNVTALYPHAEIWMAGHSLGGAVSSFLSLTFGHPAVTFEAVPEAMPASRLGLPVPPGHEIGSLQKRKMTGGYHFGHTADPIYMGQCNQATSVCTFGGYALQSVCHTGKKCVYDTVKDLGWRVGIGTHKIVEVIKDVIEKYDAPPICEPYINCTDCYTWKYFESNGTETTTTSTSKPTSTSKSSKSNTRTRTETCKTPGWWGCLDETTTGTQTSTSTPKHTSTSSTSTCKTPGWFGCKGRQRRANHNNNKVLAHNYPRPSTHRNNNILFLPNINFFMSVPRLVRRLSRRRRPSLPNKTEVVNSSANHFVYVLHA</sequence>
<dbReference type="EC" id="3.1.1.3"/>
<dbReference type="EMBL" id="CH445327">
    <property type="protein sequence ID" value="EAT90285.1"/>
    <property type="molecule type" value="Genomic_DNA"/>
</dbReference>
<dbReference type="RefSeq" id="XP_001792692.1">
    <property type="nucleotide sequence ID" value="XM_001792640.1"/>
</dbReference>
<dbReference type="FunCoup" id="Q0V1P1">
    <property type="interactions" value="47"/>
</dbReference>
<dbReference type="STRING" id="321614.Q0V1P1"/>
<dbReference type="ESTHER" id="phano-at151">
    <property type="family name" value="ATG15-related-lipase"/>
</dbReference>
<dbReference type="GlyCosmos" id="Q0V1P1">
    <property type="glycosylation" value="9 sites, No reported glycans"/>
</dbReference>
<dbReference type="EnsemblFungi" id="SNOT_02073">
    <property type="protein sequence ID" value="SNOT_02073"/>
    <property type="gene ID" value="SNOG_02073"/>
</dbReference>
<dbReference type="GeneID" id="5969542"/>
<dbReference type="KEGG" id="pno:SNOG_02073"/>
<dbReference type="VEuPathDB" id="FungiDB:JI435_020730"/>
<dbReference type="eggNOG" id="KOG4540">
    <property type="taxonomic scope" value="Eukaryota"/>
</dbReference>
<dbReference type="HOGENOM" id="CLU_028295_0_1_1"/>
<dbReference type="InParanoid" id="Q0V1P1"/>
<dbReference type="OMA" id="TYHFGHT"/>
<dbReference type="Proteomes" id="UP000001055">
    <property type="component" value="Unassembled WGS sequence"/>
</dbReference>
<dbReference type="GO" id="GO:0016020">
    <property type="term" value="C:membrane"/>
    <property type="evidence" value="ECO:0000318"/>
    <property type="project" value="GO_Central"/>
</dbReference>
<dbReference type="GO" id="GO:0032585">
    <property type="term" value="C:multivesicular body membrane"/>
    <property type="evidence" value="ECO:0007669"/>
    <property type="project" value="UniProtKB-SubCell"/>
</dbReference>
<dbReference type="GO" id="GO:0005775">
    <property type="term" value="C:vacuolar lumen"/>
    <property type="evidence" value="ECO:0000318"/>
    <property type="project" value="GO_Central"/>
</dbReference>
<dbReference type="GO" id="GO:0004620">
    <property type="term" value="F:phospholipase activity"/>
    <property type="evidence" value="ECO:0000318"/>
    <property type="project" value="GO_Central"/>
</dbReference>
<dbReference type="GO" id="GO:0004806">
    <property type="term" value="F:triacylglycerol lipase activity"/>
    <property type="evidence" value="ECO:0007669"/>
    <property type="project" value="UniProtKB-EC"/>
</dbReference>
<dbReference type="GO" id="GO:0034496">
    <property type="term" value="P:multivesicular body membrane disassembly"/>
    <property type="evidence" value="ECO:0000318"/>
    <property type="project" value="GO_Central"/>
</dbReference>
<dbReference type="GO" id="GO:0046461">
    <property type="term" value="P:neutral lipid catabolic process"/>
    <property type="evidence" value="ECO:0000318"/>
    <property type="project" value="GO_Central"/>
</dbReference>
<dbReference type="GO" id="GO:0006660">
    <property type="term" value="P:phosphatidylserine catabolic process"/>
    <property type="evidence" value="ECO:0000318"/>
    <property type="project" value="GO_Central"/>
</dbReference>
<dbReference type="GO" id="GO:0034727">
    <property type="term" value="P:piecemeal microautophagy of the nucleus"/>
    <property type="evidence" value="ECO:0000318"/>
    <property type="project" value="GO_Central"/>
</dbReference>
<dbReference type="FunFam" id="3.40.50.1820:FF:000129">
    <property type="entry name" value="Autophagy related lipase Atg15, putative"/>
    <property type="match status" value="1"/>
</dbReference>
<dbReference type="Gene3D" id="3.40.50.1820">
    <property type="entry name" value="alpha/beta hydrolase"/>
    <property type="match status" value="1"/>
</dbReference>
<dbReference type="InterPro" id="IPR029058">
    <property type="entry name" value="AB_hydrolase_fold"/>
</dbReference>
<dbReference type="InterPro" id="IPR050805">
    <property type="entry name" value="ATG15_Lipase"/>
</dbReference>
<dbReference type="InterPro" id="IPR002921">
    <property type="entry name" value="Fungal_lipase-type"/>
</dbReference>
<dbReference type="PANTHER" id="PTHR47175">
    <property type="entry name" value="LIPASE ATG15-RELATED"/>
    <property type="match status" value="1"/>
</dbReference>
<dbReference type="PANTHER" id="PTHR47175:SF2">
    <property type="entry name" value="LIPASE ATG15-RELATED"/>
    <property type="match status" value="1"/>
</dbReference>
<dbReference type="Pfam" id="PF01764">
    <property type="entry name" value="Lipase_3"/>
    <property type="match status" value="1"/>
</dbReference>
<dbReference type="SUPFAM" id="SSF53474">
    <property type="entry name" value="alpha/beta-Hydrolases"/>
    <property type="match status" value="1"/>
</dbReference>
<proteinExistence type="inferred from homology"/>
<evidence type="ECO:0000250" key="1"/>
<evidence type="ECO:0000250" key="2">
    <source>
        <dbReference type="UniProtKB" id="P25641"/>
    </source>
</evidence>
<evidence type="ECO:0000255" key="3"/>
<evidence type="ECO:0000256" key="4">
    <source>
        <dbReference type="SAM" id="MobiDB-lite"/>
    </source>
</evidence>
<evidence type="ECO:0000305" key="5"/>
<organism>
    <name type="scientific">Phaeosphaeria nodorum (strain SN15 / ATCC MYA-4574 / FGSC 10173)</name>
    <name type="common">Glume blotch fungus</name>
    <name type="synonym">Parastagonospora nodorum</name>
    <dbReference type="NCBI Taxonomy" id="321614"/>
    <lineage>
        <taxon>Eukaryota</taxon>
        <taxon>Fungi</taxon>
        <taxon>Dikarya</taxon>
        <taxon>Ascomycota</taxon>
        <taxon>Pezizomycotina</taxon>
        <taxon>Dothideomycetes</taxon>
        <taxon>Pleosporomycetidae</taxon>
        <taxon>Pleosporales</taxon>
        <taxon>Pleosporineae</taxon>
        <taxon>Phaeosphaeriaceae</taxon>
        <taxon>Parastagonospora</taxon>
    </lineage>
</organism>
<protein>
    <recommendedName>
        <fullName>Putative lipase ATG15-1</fullName>
        <ecNumber>3.1.1.3</ecNumber>
    </recommendedName>
    <alternativeName>
        <fullName>Autophagy-related protein 15</fullName>
    </alternativeName>
</protein>